<reference key="1">
    <citation type="submission" date="2007-11" db="EMBL/GenBank/DDBJ databases">
        <authorList>
            <consortium name="The Salmonella enterica serovar Paratyphi B Genome Sequencing Project"/>
            <person name="McClelland M."/>
            <person name="Sanderson E.K."/>
            <person name="Porwollik S."/>
            <person name="Spieth J."/>
            <person name="Clifton W.S."/>
            <person name="Fulton R."/>
            <person name="Cordes M."/>
            <person name="Wollam A."/>
            <person name="Shah N."/>
            <person name="Pepin K."/>
            <person name="Bhonagiri V."/>
            <person name="Nash W."/>
            <person name="Johnson M."/>
            <person name="Thiruvilangam P."/>
            <person name="Wilson R."/>
        </authorList>
    </citation>
    <scope>NUCLEOTIDE SEQUENCE [LARGE SCALE GENOMIC DNA]</scope>
    <source>
        <strain>ATCC BAA-1250 / SPB7</strain>
    </source>
</reference>
<feature type="chain" id="PRO_1000082966" description="Uronate isomerase">
    <location>
        <begin position="1"/>
        <end position="470"/>
    </location>
</feature>
<sequence>MATFMTEDFLLKNDIARTLYHKYAAPMPIYDFHCHLSPQEIADDRRFDNLGQIWLEGDHYKWRALRSAGVDESLITGKETSDYEKYMAWANTVPKTLGNPLYHWTHLELRRPFGITGTLFGPDTAESIWTQCNEKLATPAFSARGIMQQMNVRMVGTTDDPIDSLEYHRQIAADDSIDIEVAPSWRPDKVFKIELDGFVDYLRKLEAAADVSITRFDDLRQALTRRLDHFAACGCRASDHGIETLRFAPVPDDAQLDAILGKRLAGETLSELEIAQFTTAVLVWLGRQYAARGWVMQLHIGAIRNNNTRMFRLLGPDTGFDSIGDNNISWALSRLLDSMDVTNELPKTILYCLNPRDNEVLATMIGNFQGPGIAGKVQFGSGWWFNDQKDGMLRQLEQLSQMGLLSQFVGMLTDSRSFLSYTRHEYFRRILCNLLGQWAQDGEIPDDEAMLSRMVQDICFNNAQRYFTIK</sequence>
<evidence type="ECO:0000255" key="1">
    <source>
        <dbReference type="HAMAP-Rule" id="MF_00675"/>
    </source>
</evidence>
<accession>A9N4U7</accession>
<dbReference type="EC" id="5.3.1.12" evidence="1"/>
<dbReference type="EMBL" id="CP000886">
    <property type="protein sequence ID" value="ABX69247.1"/>
    <property type="molecule type" value="Genomic_DNA"/>
</dbReference>
<dbReference type="RefSeq" id="WP_000190182.1">
    <property type="nucleotide sequence ID" value="NC_010102.1"/>
</dbReference>
<dbReference type="SMR" id="A9N4U7"/>
<dbReference type="KEGG" id="spq:SPAB_03917"/>
<dbReference type="PATRIC" id="fig|1016998.12.peg.3690"/>
<dbReference type="HOGENOM" id="CLU_044465_1_0_6"/>
<dbReference type="BioCyc" id="SENT1016998:SPAB_RS15900-MONOMER"/>
<dbReference type="UniPathway" id="UPA00246"/>
<dbReference type="Proteomes" id="UP000008556">
    <property type="component" value="Chromosome"/>
</dbReference>
<dbReference type="GO" id="GO:0008880">
    <property type="term" value="F:glucuronate isomerase activity"/>
    <property type="evidence" value="ECO:0007669"/>
    <property type="project" value="UniProtKB-UniRule"/>
</dbReference>
<dbReference type="GO" id="GO:0019698">
    <property type="term" value="P:D-galacturonate catabolic process"/>
    <property type="evidence" value="ECO:0007669"/>
    <property type="project" value="TreeGrafter"/>
</dbReference>
<dbReference type="GO" id="GO:0042840">
    <property type="term" value="P:D-glucuronate catabolic process"/>
    <property type="evidence" value="ECO:0007669"/>
    <property type="project" value="TreeGrafter"/>
</dbReference>
<dbReference type="Gene3D" id="3.20.20.140">
    <property type="entry name" value="Metal-dependent hydrolases"/>
    <property type="match status" value="1"/>
</dbReference>
<dbReference type="Gene3D" id="1.10.2020.10">
    <property type="entry name" value="uronate isomerase, domain 2, chain A"/>
    <property type="match status" value="1"/>
</dbReference>
<dbReference type="HAMAP" id="MF_00675">
    <property type="entry name" value="UxaC"/>
    <property type="match status" value="1"/>
</dbReference>
<dbReference type="InterPro" id="IPR032466">
    <property type="entry name" value="Metal_Hydrolase"/>
</dbReference>
<dbReference type="InterPro" id="IPR003766">
    <property type="entry name" value="Uronate_isomerase"/>
</dbReference>
<dbReference type="NCBIfam" id="NF002794">
    <property type="entry name" value="PRK02925.1"/>
    <property type="match status" value="1"/>
</dbReference>
<dbReference type="PANTHER" id="PTHR30068">
    <property type="entry name" value="URONATE ISOMERASE"/>
    <property type="match status" value="1"/>
</dbReference>
<dbReference type="PANTHER" id="PTHR30068:SF4">
    <property type="entry name" value="URONATE ISOMERASE"/>
    <property type="match status" value="1"/>
</dbReference>
<dbReference type="Pfam" id="PF02614">
    <property type="entry name" value="UxaC"/>
    <property type="match status" value="1"/>
</dbReference>
<dbReference type="SUPFAM" id="SSF51556">
    <property type="entry name" value="Metallo-dependent hydrolases"/>
    <property type="match status" value="1"/>
</dbReference>
<gene>
    <name evidence="1" type="primary">uxaC</name>
    <name type="ordered locus">SPAB_03917</name>
</gene>
<organism>
    <name type="scientific">Salmonella paratyphi B (strain ATCC BAA-1250 / SPB7)</name>
    <dbReference type="NCBI Taxonomy" id="1016998"/>
    <lineage>
        <taxon>Bacteria</taxon>
        <taxon>Pseudomonadati</taxon>
        <taxon>Pseudomonadota</taxon>
        <taxon>Gammaproteobacteria</taxon>
        <taxon>Enterobacterales</taxon>
        <taxon>Enterobacteriaceae</taxon>
        <taxon>Salmonella</taxon>
    </lineage>
</organism>
<keyword id="KW-0413">Isomerase</keyword>
<name>UXAC_SALPB</name>
<comment type="catalytic activity">
    <reaction evidence="1">
        <text>D-glucuronate = D-fructuronate</text>
        <dbReference type="Rhea" id="RHEA:13049"/>
        <dbReference type="ChEBI" id="CHEBI:58720"/>
        <dbReference type="ChEBI" id="CHEBI:59863"/>
        <dbReference type="EC" id="5.3.1.12"/>
    </reaction>
</comment>
<comment type="catalytic activity">
    <reaction evidence="1">
        <text>aldehydo-D-galacturonate = keto-D-tagaturonate</text>
        <dbReference type="Rhea" id="RHEA:27702"/>
        <dbReference type="ChEBI" id="CHEBI:12952"/>
        <dbReference type="ChEBI" id="CHEBI:17886"/>
        <dbReference type="EC" id="5.3.1.12"/>
    </reaction>
</comment>
<comment type="pathway">
    <text evidence="1">Carbohydrate metabolism; pentose and glucuronate interconversion.</text>
</comment>
<comment type="similarity">
    <text evidence="1">Belongs to the metallo-dependent hydrolases superfamily. Uronate isomerase family.</text>
</comment>
<protein>
    <recommendedName>
        <fullName evidence="1">Uronate isomerase</fullName>
        <ecNumber evidence="1">5.3.1.12</ecNumber>
    </recommendedName>
    <alternativeName>
        <fullName evidence="1">Glucuronate isomerase</fullName>
    </alternativeName>
    <alternativeName>
        <fullName evidence="1">Uronic isomerase</fullName>
    </alternativeName>
</protein>
<proteinExistence type="inferred from homology"/>